<feature type="chain" id="PRO_0000165376" description="S-adenosylmethionine:tRNA ribosyltransferase-isomerase">
    <location>
        <begin position="1"/>
        <end position="334"/>
    </location>
</feature>
<organism>
    <name type="scientific">Aquifex aeolicus (strain VF5)</name>
    <dbReference type="NCBI Taxonomy" id="224324"/>
    <lineage>
        <taxon>Bacteria</taxon>
        <taxon>Pseudomonadati</taxon>
        <taxon>Aquificota</taxon>
        <taxon>Aquificia</taxon>
        <taxon>Aquificales</taxon>
        <taxon>Aquificaceae</taxon>
        <taxon>Aquifex</taxon>
    </lineage>
</organism>
<accession>O67043</accession>
<protein>
    <recommendedName>
        <fullName evidence="1">S-adenosylmethionine:tRNA ribosyltransferase-isomerase</fullName>
        <ecNumber evidence="1">2.4.99.17</ecNumber>
    </recommendedName>
    <alternativeName>
        <fullName evidence="1">Queuosine biosynthesis protein QueA</fullName>
    </alternativeName>
</protein>
<reference key="1">
    <citation type="journal article" date="1998" name="Nature">
        <title>The complete genome of the hyperthermophilic bacterium Aquifex aeolicus.</title>
        <authorList>
            <person name="Deckert G."/>
            <person name="Warren P.V."/>
            <person name="Gaasterland T."/>
            <person name="Young W.G."/>
            <person name="Lenox A.L."/>
            <person name="Graham D.E."/>
            <person name="Overbeek R."/>
            <person name="Snead M.A."/>
            <person name="Keller M."/>
            <person name="Aujay M."/>
            <person name="Huber R."/>
            <person name="Feldman R.A."/>
            <person name="Short J.M."/>
            <person name="Olsen G.J."/>
            <person name="Swanson R.V."/>
        </authorList>
    </citation>
    <scope>NUCLEOTIDE SEQUENCE [LARGE SCALE GENOMIC DNA]</scope>
    <source>
        <strain>VF5</strain>
    </source>
</reference>
<comment type="function">
    <text evidence="1">Transfers and isomerizes the ribose moiety from AdoMet to the 7-aminomethyl group of 7-deazaguanine (preQ1-tRNA) to give epoxyqueuosine (oQ-tRNA).</text>
</comment>
<comment type="catalytic activity">
    <reaction evidence="1">
        <text>7-aminomethyl-7-carbaguanosine(34) in tRNA + S-adenosyl-L-methionine = epoxyqueuosine(34) in tRNA + adenine + L-methionine + 2 H(+)</text>
        <dbReference type="Rhea" id="RHEA:32155"/>
        <dbReference type="Rhea" id="RHEA-COMP:10342"/>
        <dbReference type="Rhea" id="RHEA-COMP:18582"/>
        <dbReference type="ChEBI" id="CHEBI:15378"/>
        <dbReference type="ChEBI" id="CHEBI:16708"/>
        <dbReference type="ChEBI" id="CHEBI:57844"/>
        <dbReference type="ChEBI" id="CHEBI:59789"/>
        <dbReference type="ChEBI" id="CHEBI:82833"/>
        <dbReference type="ChEBI" id="CHEBI:194443"/>
        <dbReference type="EC" id="2.4.99.17"/>
    </reaction>
</comment>
<comment type="pathway">
    <text evidence="1">tRNA modification; tRNA-queuosine biosynthesis.</text>
</comment>
<comment type="subunit">
    <text evidence="1">Monomer.</text>
</comment>
<comment type="subcellular location">
    <subcellularLocation>
        <location evidence="1">Cytoplasm</location>
    </subcellularLocation>
</comment>
<comment type="similarity">
    <text evidence="1">Belongs to the QueA family.</text>
</comment>
<sequence length="334" mass="38615">MRIEEFDYELPEELIAKYPAVPRHSARLMVLNRKDQSIKHDTFINLPDYLEEGDLLVFNNTKVIPARLYGRKPTGGRVEVVLTDFIKPDEWKALIGGKKIRPGLVIEVAPDFKVEVLEHIEEGKFRVKLLGEEPLKLIDKYGHIPIPPYLKREEEPIDRVYYQTIFAKEKGAVASPTASLHFSEELLEKLKEKGINFAFITLHVSYGTFKPVKVERVEEHRVDPEYVKIPKETVEKIKETKEKGKRVVAVGTTVVRALETKPFEPFEGWTDLYIYPGFKFKVVDAMITNFHLPRSSLLILVSAFAGREFILKAYREAVEKRYRFYSYGDGMLIL</sequence>
<gene>
    <name evidence="1" type="primary">queA</name>
    <name type="ordered locus">aq_894</name>
</gene>
<evidence type="ECO:0000255" key="1">
    <source>
        <dbReference type="HAMAP-Rule" id="MF_00113"/>
    </source>
</evidence>
<dbReference type="EC" id="2.4.99.17" evidence="1"/>
<dbReference type="EMBL" id="AE000657">
    <property type="protein sequence ID" value="AAC07001.1"/>
    <property type="molecule type" value="Genomic_DNA"/>
</dbReference>
<dbReference type="PIR" id="H70376">
    <property type="entry name" value="H70376"/>
</dbReference>
<dbReference type="RefSeq" id="NP_213605.1">
    <property type="nucleotide sequence ID" value="NC_000918.1"/>
</dbReference>
<dbReference type="RefSeq" id="WP_010880543.1">
    <property type="nucleotide sequence ID" value="NC_000918.1"/>
</dbReference>
<dbReference type="SMR" id="O67043"/>
<dbReference type="FunCoup" id="O67043">
    <property type="interactions" value="373"/>
</dbReference>
<dbReference type="STRING" id="224324.aq_894"/>
<dbReference type="EnsemblBacteria" id="AAC07001">
    <property type="protein sequence ID" value="AAC07001"/>
    <property type="gene ID" value="aq_894"/>
</dbReference>
<dbReference type="KEGG" id="aae:aq_894"/>
<dbReference type="PATRIC" id="fig|224324.8.peg.695"/>
<dbReference type="eggNOG" id="COG0809">
    <property type="taxonomic scope" value="Bacteria"/>
</dbReference>
<dbReference type="HOGENOM" id="CLU_039110_1_0_0"/>
<dbReference type="InParanoid" id="O67043"/>
<dbReference type="OrthoDB" id="9805933at2"/>
<dbReference type="UniPathway" id="UPA00392"/>
<dbReference type="Proteomes" id="UP000000798">
    <property type="component" value="Chromosome"/>
</dbReference>
<dbReference type="GO" id="GO:0005737">
    <property type="term" value="C:cytoplasm"/>
    <property type="evidence" value="ECO:0007669"/>
    <property type="project" value="UniProtKB-SubCell"/>
</dbReference>
<dbReference type="GO" id="GO:0051075">
    <property type="term" value="F:S-adenosylmethionine:tRNA ribosyltransferase-isomerase activity"/>
    <property type="evidence" value="ECO:0000318"/>
    <property type="project" value="GO_Central"/>
</dbReference>
<dbReference type="GO" id="GO:0008616">
    <property type="term" value="P:queuosine biosynthetic process"/>
    <property type="evidence" value="ECO:0000318"/>
    <property type="project" value="GO_Central"/>
</dbReference>
<dbReference type="GO" id="GO:0002099">
    <property type="term" value="P:tRNA wobble guanine modification"/>
    <property type="evidence" value="ECO:0000318"/>
    <property type="project" value="GO_Central"/>
</dbReference>
<dbReference type="FunFam" id="3.40.1780.10:FF:000001">
    <property type="entry name" value="S-adenosylmethionine:tRNA ribosyltransferase-isomerase"/>
    <property type="match status" value="1"/>
</dbReference>
<dbReference type="FunFam" id="3.40.1780.10:FF:000005">
    <property type="entry name" value="S-adenosylmethionine:tRNA ribosyltransferase-isomerase"/>
    <property type="match status" value="1"/>
</dbReference>
<dbReference type="Gene3D" id="2.40.10.240">
    <property type="entry name" value="QueA-like"/>
    <property type="match status" value="1"/>
</dbReference>
<dbReference type="Gene3D" id="3.40.1780.10">
    <property type="entry name" value="QueA-like"/>
    <property type="match status" value="2"/>
</dbReference>
<dbReference type="HAMAP" id="MF_00113">
    <property type="entry name" value="QueA"/>
    <property type="match status" value="1"/>
</dbReference>
<dbReference type="InterPro" id="IPR003699">
    <property type="entry name" value="QueA"/>
</dbReference>
<dbReference type="InterPro" id="IPR042118">
    <property type="entry name" value="QueA_dom1"/>
</dbReference>
<dbReference type="InterPro" id="IPR042119">
    <property type="entry name" value="QueA_dom2"/>
</dbReference>
<dbReference type="InterPro" id="IPR036100">
    <property type="entry name" value="QueA_sf"/>
</dbReference>
<dbReference type="NCBIfam" id="NF001140">
    <property type="entry name" value="PRK00147.1"/>
    <property type="match status" value="1"/>
</dbReference>
<dbReference type="NCBIfam" id="TIGR00113">
    <property type="entry name" value="queA"/>
    <property type="match status" value="1"/>
</dbReference>
<dbReference type="PANTHER" id="PTHR30307">
    <property type="entry name" value="S-ADENOSYLMETHIONINE:TRNA RIBOSYLTRANSFERASE-ISOMERASE"/>
    <property type="match status" value="1"/>
</dbReference>
<dbReference type="PANTHER" id="PTHR30307:SF0">
    <property type="entry name" value="S-ADENOSYLMETHIONINE:TRNA RIBOSYLTRANSFERASE-ISOMERASE"/>
    <property type="match status" value="1"/>
</dbReference>
<dbReference type="Pfam" id="PF02547">
    <property type="entry name" value="Queuosine_synth"/>
    <property type="match status" value="1"/>
</dbReference>
<dbReference type="SUPFAM" id="SSF111337">
    <property type="entry name" value="QueA-like"/>
    <property type="match status" value="1"/>
</dbReference>
<keyword id="KW-0963">Cytoplasm</keyword>
<keyword id="KW-0671">Queuosine biosynthesis</keyword>
<keyword id="KW-1185">Reference proteome</keyword>
<keyword id="KW-0949">S-adenosyl-L-methionine</keyword>
<keyword id="KW-0808">Transferase</keyword>
<proteinExistence type="inferred from homology"/>
<name>QUEA_AQUAE</name>